<gene>
    <name evidence="1" type="primary">clpP2</name>
    <name type="ordered locus">PMT9312_1411</name>
</gene>
<evidence type="ECO:0000255" key="1">
    <source>
        <dbReference type="HAMAP-Rule" id="MF_00444"/>
    </source>
</evidence>
<comment type="function">
    <text evidence="1">Cleaves peptides in various proteins in a process that requires ATP hydrolysis. Has a chymotrypsin-like activity. Plays a major role in the degradation of misfolded proteins.</text>
</comment>
<comment type="catalytic activity">
    <reaction evidence="1">
        <text>Hydrolysis of proteins to small peptides in the presence of ATP and magnesium. alpha-casein is the usual test substrate. In the absence of ATP, only oligopeptides shorter than five residues are hydrolyzed (such as succinyl-Leu-Tyr-|-NHMec, and Leu-Tyr-Leu-|-Tyr-Trp, in which cleavage of the -Tyr-|-Leu- and -Tyr-|-Trp bonds also occurs).</text>
        <dbReference type="EC" id="3.4.21.92"/>
    </reaction>
</comment>
<comment type="subunit">
    <text evidence="1">Fourteen ClpP subunits assemble into 2 heptameric rings which stack back to back to give a disk-like structure with a central cavity, resembling the structure of eukaryotic proteasomes.</text>
</comment>
<comment type="subcellular location">
    <subcellularLocation>
        <location evidence="1">Cytoplasm</location>
    </subcellularLocation>
</comment>
<comment type="similarity">
    <text evidence="1">Belongs to the peptidase S14 family.</text>
</comment>
<feature type="chain" id="PRO_0000236399" description="ATP-dependent Clp protease proteolytic subunit 2">
    <location>
        <begin position="1"/>
        <end position="203"/>
    </location>
</feature>
<feature type="active site" description="Nucleophile" evidence="1">
    <location>
        <position position="101"/>
    </location>
</feature>
<feature type="active site" evidence="1">
    <location>
        <position position="126"/>
    </location>
</feature>
<proteinExistence type="inferred from homology"/>
<reference key="1">
    <citation type="journal article" date="2006" name="Science">
        <title>Genomic islands and the ecology and evolution of Prochlorococcus.</title>
        <authorList>
            <person name="Coleman M.L."/>
            <person name="Sullivan M.B."/>
            <person name="Martiny A.C."/>
            <person name="Steglich C."/>
            <person name="Barry K."/>
            <person name="Delong E.F."/>
            <person name="Chisholm S.W."/>
        </authorList>
    </citation>
    <scope>NUCLEOTIDE SEQUENCE [LARGE SCALE GENOMIC DNA]</scope>
    <source>
        <strain>MIT 9312</strain>
    </source>
</reference>
<organism>
    <name type="scientific">Prochlorococcus marinus (strain MIT 9312)</name>
    <dbReference type="NCBI Taxonomy" id="74546"/>
    <lineage>
        <taxon>Bacteria</taxon>
        <taxon>Bacillati</taxon>
        <taxon>Cyanobacteriota</taxon>
        <taxon>Cyanophyceae</taxon>
        <taxon>Synechococcales</taxon>
        <taxon>Prochlorococcaceae</taxon>
        <taxon>Prochlorococcus</taxon>
    </lineage>
</organism>
<sequence length="203" mass="22367">MPIGTPSVPYRLPGSQYERWVDIYTRLGVERILFLGQEVNDGIANSLVAQMLYLDSDDNSKPIYLYINSPGGSVTAGLAIYDTIKYVKSDVVTICVGLAASMGAFLLAAGTKGKRVALPHSRIMIHQPLGGTSQRQASDIEIEAKEILRIKDMLNMSMADMTGQSFEKIEKDTDRDYFLSAEEAKNYGLIDRVITHPSEANQS</sequence>
<name>CLPP2_PROM9</name>
<protein>
    <recommendedName>
        <fullName evidence="1">ATP-dependent Clp protease proteolytic subunit 2</fullName>
        <ecNumber evidence="1">3.4.21.92</ecNumber>
    </recommendedName>
    <alternativeName>
        <fullName evidence="1">Endopeptidase Clp 2</fullName>
    </alternativeName>
</protein>
<keyword id="KW-0963">Cytoplasm</keyword>
<keyword id="KW-0378">Hydrolase</keyword>
<keyword id="KW-0645">Protease</keyword>
<keyword id="KW-0720">Serine protease</keyword>
<dbReference type="EC" id="3.4.21.92" evidence="1"/>
<dbReference type="EMBL" id="CP000111">
    <property type="protein sequence ID" value="ABB50471.1"/>
    <property type="molecule type" value="Genomic_DNA"/>
</dbReference>
<dbReference type="RefSeq" id="WP_002807795.1">
    <property type="nucleotide sequence ID" value="NC_007577.1"/>
</dbReference>
<dbReference type="SMR" id="Q319H4"/>
<dbReference type="STRING" id="74546.PMT9312_1411"/>
<dbReference type="MEROPS" id="S14.001"/>
<dbReference type="KEGG" id="pmi:PMT9312_1411"/>
<dbReference type="eggNOG" id="COG0740">
    <property type="taxonomic scope" value="Bacteria"/>
</dbReference>
<dbReference type="HOGENOM" id="CLU_058707_3_2_3"/>
<dbReference type="OrthoDB" id="571524at2"/>
<dbReference type="Proteomes" id="UP000002715">
    <property type="component" value="Chromosome"/>
</dbReference>
<dbReference type="GO" id="GO:0005737">
    <property type="term" value="C:cytoplasm"/>
    <property type="evidence" value="ECO:0007669"/>
    <property type="project" value="UniProtKB-SubCell"/>
</dbReference>
<dbReference type="GO" id="GO:0009368">
    <property type="term" value="C:endopeptidase Clp complex"/>
    <property type="evidence" value="ECO:0007669"/>
    <property type="project" value="TreeGrafter"/>
</dbReference>
<dbReference type="GO" id="GO:0004176">
    <property type="term" value="F:ATP-dependent peptidase activity"/>
    <property type="evidence" value="ECO:0007669"/>
    <property type="project" value="InterPro"/>
</dbReference>
<dbReference type="GO" id="GO:0051117">
    <property type="term" value="F:ATPase binding"/>
    <property type="evidence" value="ECO:0007669"/>
    <property type="project" value="TreeGrafter"/>
</dbReference>
<dbReference type="GO" id="GO:0004252">
    <property type="term" value="F:serine-type endopeptidase activity"/>
    <property type="evidence" value="ECO:0007669"/>
    <property type="project" value="UniProtKB-UniRule"/>
</dbReference>
<dbReference type="GO" id="GO:0006515">
    <property type="term" value="P:protein quality control for misfolded or incompletely synthesized proteins"/>
    <property type="evidence" value="ECO:0007669"/>
    <property type="project" value="TreeGrafter"/>
</dbReference>
<dbReference type="CDD" id="cd07017">
    <property type="entry name" value="S14_ClpP_2"/>
    <property type="match status" value="1"/>
</dbReference>
<dbReference type="FunFam" id="3.90.226.10:FF:000001">
    <property type="entry name" value="ATP-dependent Clp protease proteolytic subunit"/>
    <property type="match status" value="1"/>
</dbReference>
<dbReference type="Gene3D" id="3.90.226.10">
    <property type="entry name" value="2-enoyl-CoA Hydratase, Chain A, domain 1"/>
    <property type="match status" value="1"/>
</dbReference>
<dbReference type="HAMAP" id="MF_00444">
    <property type="entry name" value="ClpP"/>
    <property type="match status" value="1"/>
</dbReference>
<dbReference type="InterPro" id="IPR001907">
    <property type="entry name" value="ClpP"/>
</dbReference>
<dbReference type="InterPro" id="IPR029045">
    <property type="entry name" value="ClpP/crotonase-like_dom_sf"/>
</dbReference>
<dbReference type="InterPro" id="IPR023562">
    <property type="entry name" value="ClpP/TepA"/>
</dbReference>
<dbReference type="InterPro" id="IPR033135">
    <property type="entry name" value="ClpP_His_AS"/>
</dbReference>
<dbReference type="InterPro" id="IPR018215">
    <property type="entry name" value="ClpP_Ser_AS"/>
</dbReference>
<dbReference type="NCBIfam" id="NF001368">
    <property type="entry name" value="PRK00277.1"/>
    <property type="match status" value="1"/>
</dbReference>
<dbReference type="NCBIfam" id="NF009205">
    <property type="entry name" value="PRK12553.1"/>
    <property type="match status" value="1"/>
</dbReference>
<dbReference type="PANTHER" id="PTHR10381">
    <property type="entry name" value="ATP-DEPENDENT CLP PROTEASE PROTEOLYTIC SUBUNIT"/>
    <property type="match status" value="1"/>
</dbReference>
<dbReference type="PANTHER" id="PTHR10381:SF70">
    <property type="entry name" value="ATP-DEPENDENT CLP PROTEASE PROTEOLYTIC SUBUNIT"/>
    <property type="match status" value="1"/>
</dbReference>
<dbReference type="Pfam" id="PF00574">
    <property type="entry name" value="CLP_protease"/>
    <property type="match status" value="1"/>
</dbReference>
<dbReference type="PRINTS" id="PR00127">
    <property type="entry name" value="CLPPROTEASEP"/>
</dbReference>
<dbReference type="SUPFAM" id="SSF52096">
    <property type="entry name" value="ClpP/crotonase"/>
    <property type="match status" value="1"/>
</dbReference>
<dbReference type="PROSITE" id="PS00382">
    <property type="entry name" value="CLP_PROTEASE_HIS"/>
    <property type="match status" value="1"/>
</dbReference>
<dbReference type="PROSITE" id="PS00381">
    <property type="entry name" value="CLP_PROTEASE_SER"/>
    <property type="match status" value="1"/>
</dbReference>
<accession>Q319H4</accession>